<proteinExistence type="predicted"/>
<organism>
    <name type="scientific">Xanthomonas campestris pv. campestris (strain ATCC 33913 / DSM 3586 / NCPPB 528 / LMG 568 / P 25)</name>
    <dbReference type="NCBI Taxonomy" id="190485"/>
    <lineage>
        <taxon>Bacteria</taxon>
        <taxon>Pseudomonadati</taxon>
        <taxon>Pseudomonadota</taxon>
        <taxon>Gammaproteobacteria</taxon>
        <taxon>Lysobacterales</taxon>
        <taxon>Lysobacteraceae</taxon>
        <taxon>Xanthomonas</taxon>
    </lineage>
</organism>
<accession>P68673</accession>
<accession>Q07485</accession>
<protein>
    <recommendedName>
        <fullName>Phi-Lf prophage-derived major coat protein</fullName>
        <shortName>MCP</shortName>
    </recommendedName>
</protein>
<feature type="chain" id="PRO_0000098227" description="Phi-Lf prophage-derived major coat protein">
    <location>
        <begin position="1"/>
        <end position="42"/>
    </location>
</feature>
<sequence>MGDILTGVSGAEAATAMIAAAAIIALVGFTKWGAKKVASFFG</sequence>
<gene>
    <name type="primary">gVIII-1</name>
    <name type="ordered locus">XCC2062</name>
</gene>
<gene>
    <name type="primary">gVIII-2</name>
    <name type="ordered locus">XCC2071</name>
</gene>
<keyword id="KW-1185">Reference proteome</keyword>
<name>COAT_XANCP</name>
<dbReference type="EMBL" id="AE008922">
    <property type="protein sequence ID" value="AAM41351.1"/>
    <property type="molecule type" value="Genomic_DNA"/>
</dbReference>
<dbReference type="EMBL" id="AE008922">
    <property type="protein sequence ID" value="AAM41360.1"/>
    <property type="molecule type" value="Genomic_DNA"/>
</dbReference>
<dbReference type="RefSeq" id="NP_637427.1">
    <property type="nucleotide sequence ID" value="NC_003902.1"/>
</dbReference>
<dbReference type="RefSeq" id="NP_637436.1">
    <property type="nucleotide sequence ID" value="NC_003902.1"/>
</dbReference>
<dbReference type="RefSeq" id="WP_005918131.1">
    <property type="nucleotide sequence ID" value="NC_003902.1"/>
</dbReference>
<dbReference type="STRING" id="190485.XCC2062"/>
<dbReference type="EnsemblBacteria" id="AAM41351">
    <property type="protein sequence ID" value="AAM41351"/>
    <property type="gene ID" value="XCC2062"/>
</dbReference>
<dbReference type="EnsemblBacteria" id="AAM41360">
    <property type="protein sequence ID" value="AAM41360"/>
    <property type="gene ID" value="XCC2071"/>
</dbReference>
<dbReference type="KEGG" id="xcc:XCC2062"/>
<dbReference type="KEGG" id="xcc:XCC2071"/>
<dbReference type="PATRIC" id="fig|190485.4.peg.2209"/>
<dbReference type="HOGENOM" id="CLU_218080_0_0_6"/>
<dbReference type="Proteomes" id="UP000001010">
    <property type="component" value="Chromosome"/>
</dbReference>
<reference key="1">
    <citation type="journal article" date="2002" name="Nature">
        <title>Comparison of the genomes of two Xanthomonas pathogens with differing host specificities.</title>
        <authorList>
            <person name="da Silva A.C.R."/>
            <person name="Ferro J.A."/>
            <person name="Reinach F.C."/>
            <person name="Farah C.S."/>
            <person name="Furlan L.R."/>
            <person name="Quaggio R.B."/>
            <person name="Monteiro-Vitorello C.B."/>
            <person name="Van Sluys M.A."/>
            <person name="Almeida N.F. Jr."/>
            <person name="Alves L.M.C."/>
            <person name="do Amaral A.M."/>
            <person name="Bertolini M.C."/>
            <person name="Camargo L.E.A."/>
            <person name="Camarotte G."/>
            <person name="Cannavan F."/>
            <person name="Cardozo J."/>
            <person name="Chambergo F."/>
            <person name="Ciapina L.P."/>
            <person name="Cicarelli R.M.B."/>
            <person name="Coutinho L.L."/>
            <person name="Cursino-Santos J.R."/>
            <person name="El-Dorry H."/>
            <person name="Faria J.B."/>
            <person name="Ferreira A.J.S."/>
            <person name="Ferreira R.C.C."/>
            <person name="Ferro M.I.T."/>
            <person name="Formighieri E.F."/>
            <person name="Franco M.C."/>
            <person name="Greggio C.C."/>
            <person name="Gruber A."/>
            <person name="Katsuyama A.M."/>
            <person name="Kishi L.T."/>
            <person name="Leite R.P."/>
            <person name="Lemos E.G.M."/>
            <person name="Lemos M.V.F."/>
            <person name="Locali E.C."/>
            <person name="Machado M.A."/>
            <person name="Madeira A.M.B.N."/>
            <person name="Martinez-Rossi N.M."/>
            <person name="Martins E.C."/>
            <person name="Meidanis J."/>
            <person name="Menck C.F.M."/>
            <person name="Miyaki C.Y."/>
            <person name="Moon D.H."/>
            <person name="Moreira L.M."/>
            <person name="Novo M.T.M."/>
            <person name="Okura V.K."/>
            <person name="Oliveira M.C."/>
            <person name="Oliveira V.R."/>
            <person name="Pereira H.A."/>
            <person name="Rossi A."/>
            <person name="Sena J.A.D."/>
            <person name="Silva C."/>
            <person name="de Souza R.F."/>
            <person name="Spinola L.A.F."/>
            <person name="Takita M.A."/>
            <person name="Tamura R.E."/>
            <person name="Teixeira E.C."/>
            <person name="Tezza R.I.D."/>
            <person name="Trindade dos Santos M."/>
            <person name="Truffi D."/>
            <person name="Tsai S.M."/>
            <person name="White F.F."/>
            <person name="Setubal J.C."/>
            <person name="Kitajima J.P."/>
        </authorList>
    </citation>
    <scope>NUCLEOTIDE SEQUENCE [LARGE SCALE GENOMIC DNA]</scope>
    <source>
        <strain>ATCC 33913 / DSM 3586 / NCPPB 528 / LMG 568 / P 25</strain>
    </source>
</reference>